<name>RR9_GUITH</name>
<reference key="1">
    <citation type="journal article" date="1997" name="Biochem. Mol. Biol. Int.">
        <title>The large ribosomal protein gene cluster of a cryptomonad plastid: gene organization, sequence and evolutionary implications.</title>
        <authorList>
            <person name="Wang S.L."/>
            <person name="Liu X.-Q."/>
            <person name="Douglas S.E."/>
        </authorList>
    </citation>
    <scope>NUCLEOTIDE SEQUENCE [GENOMIC DNA]</scope>
</reference>
<reference key="2">
    <citation type="journal article" date="1991" name="Curr. Genet.">
        <title>Unusual organization of a ribosomal protein operon in the plastid genome of Cryptomonas phi: evolutionary considerations.</title>
        <authorList>
            <person name="Douglas S.E."/>
        </authorList>
    </citation>
    <scope>NUCLEOTIDE SEQUENCE [GENOMIC DNA] OF 97-134</scope>
</reference>
<evidence type="ECO:0000305" key="1"/>
<accession>P19459</accession>
<accession>O46916</accession>
<protein>
    <recommendedName>
        <fullName evidence="1">Small ribosomal subunit protein uS9c</fullName>
    </recommendedName>
    <alternativeName>
        <fullName>30S ribosomal protein S9, chloroplastic</fullName>
    </alternativeName>
</protein>
<geneLocation type="chloroplast"/>
<sequence>MIENLKTNYTGTGHRKQAIARVYLTPGSGLIEVNGIKGELYFQYSPNYIRLSKSPLTTLGLENKYNIYVNAHGGGLTGQVEAIRLGLARALCKLNPENRTALKFEGYLTRDSRITERKKYGLKKARKAPQFSKR</sequence>
<proteinExistence type="inferred from homology"/>
<keyword id="KW-0150">Chloroplast</keyword>
<keyword id="KW-0934">Plastid</keyword>
<keyword id="KW-0687">Ribonucleoprotein</keyword>
<keyword id="KW-0689">Ribosomal protein</keyword>
<organism>
    <name type="scientific">Guillardia theta</name>
    <name type="common">Cryptophyte</name>
    <name type="synonym">Cryptomonas phi</name>
    <dbReference type="NCBI Taxonomy" id="55529"/>
    <lineage>
        <taxon>Eukaryota</taxon>
        <taxon>Cryptophyceae</taxon>
        <taxon>Pyrenomonadales</taxon>
        <taxon>Geminigeraceae</taxon>
        <taxon>Guillardia</taxon>
    </lineage>
</organism>
<gene>
    <name type="primary">rps9</name>
</gene>
<comment type="subcellular location">
    <subcellularLocation>
        <location>Plastid</location>
        <location>Chloroplast</location>
    </subcellularLocation>
</comment>
<comment type="similarity">
    <text evidence="1">Belongs to the universal ribosomal protein uS9 family.</text>
</comment>
<dbReference type="EMBL" id="AF041468">
    <property type="protein sequence ID" value="AAC35726.1"/>
    <property type="molecule type" value="Genomic_DNA"/>
</dbReference>
<dbReference type="RefSeq" id="NP_050792.1">
    <property type="nucleotide sequence ID" value="NC_000926.1"/>
</dbReference>
<dbReference type="SMR" id="P19459"/>
<dbReference type="GeneID" id="857100"/>
<dbReference type="HOGENOM" id="CLU_046483_2_1_1"/>
<dbReference type="OMA" id="IQINQVD"/>
<dbReference type="GO" id="GO:0009507">
    <property type="term" value="C:chloroplast"/>
    <property type="evidence" value="ECO:0007669"/>
    <property type="project" value="UniProtKB-SubCell"/>
</dbReference>
<dbReference type="GO" id="GO:0022627">
    <property type="term" value="C:cytosolic small ribosomal subunit"/>
    <property type="evidence" value="ECO:0007669"/>
    <property type="project" value="TreeGrafter"/>
</dbReference>
<dbReference type="GO" id="GO:0003723">
    <property type="term" value="F:RNA binding"/>
    <property type="evidence" value="ECO:0007669"/>
    <property type="project" value="TreeGrafter"/>
</dbReference>
<dbReference type="GO" id="GO:0003735">
    <property type="term" value="F:structural constituent of ribosome"/>
    <property type="evidence" value="ECO:0007669"/>
    <property type="project" value="InterPro"/>
</dbReference>
<dbReference type="GO" id="GO:0006412">
    <property type="term" value="P:translation"/>
    <property type="evidence" value="ECO:0007669"/>
    <property type="project" value="UniProtKB-UniRule"/>
</dbReference>
<dbReference type="FunFam" id="3.30.230.10:FF:000001">
    <property type="entry name" value="30S ribosomal protein S9"/>
    <property type="match status" value="1"/>
</dbReference>
<dbReference type="Gene3D" id="3.30.230.10">
    <property type="match status" value="1"/>
</dbReference>
<dbReference type="HAMAP" id="MF_00532_B">
    <property type="entry name" value="Ribosomal_uS9_B"/>
    <property type="match status" value="1"/>
</dbReference>
<dbReference type="InterPro" id="IPR020568">
    <property type="entry name" value="Ribosomal_Su5_D2-typ_SF"/>
</dbReference>
<dbReference type="InterPro" id="IPR000754">
    <property type="entry name" value="Ribosomal_uS9"/>
</dbReference>
<dbReference type="InterPro" id="IPR023035">
    <property type="entry name" value="Ribosomal_uS9_bac/plastid"/>
</dbReference>
<dbReference type="InterPro" id="IPR020574">
    <property type="entry name" value="Ribosomal_uS9_CS"/>
</dbReference>
<dbReference type="InterPro" id="IPR014721">
    <property type="entry name" value="Ribsml_uS5_D2-typ_fold_subgr"/>
</dbReference>
<dbReference type="NCBIfam" id="NF001099">
    <property type="entry name" value="PRK00132.1"/>
    <property type="match status" value="1"/>
</dbReference>
<dbReference type="PANTHER" id="PTHR21569">
    <property type="entry name" value="RIBOSOMAL PROTEIN S9"/>
    <property type="match status" value="1"/>
</dbReference>
<dbReference type="PANTHER" id="PTHR21569:SF1">
    <property type="entry name" value="SMALL RIBOSOMAL SUBUNIT PROTEIN US9M"/>
    <property type="match status" value="1"/>
</dbReference>
<dbReference type="Pfam" id="PF00380">
    <property type="entry name" value="Ribosomal_S9"/>
    <property type="match status" value="1"/>
</dbReference>
<dbReference type="SUPFAM" id="SSF54211">
    <property type="entry name" value="Ribosomal protein S5 domain 2-like"/>
    <property type="match status" value="1"/>
</dbReference>
<dbReference type="PROSITE" id="PS00360">
    <property type="entry name" value="RIBOSOMAL_S9"/>
    <property type="match status" value="1"/>
</dbReference>
<feature type="chain" id="PRO_0000111455" description="Small ribosomal subunit protein uS9c">
    <location>
        <begin position="1"/>
        <end position="134"/>
    </location>
</feature>